<organism>
    <name type="scientific">Dictyostelium discoideum</name>
    <name type="common">Social amoeba</name>
    <dbReference type="NCBI Taxonomy" id="44689"/>
    <lineage>
        <taxon>Eukaryota</taxon>
        <taxon>Amoebozoa</taxon>
        <taxon>Evosea</taxon>
        <taxon>Eumycetozoa</taxon>
        <taxon>Dictyostelia</taxon>
        <taxon>Dictyosteliales</taxon>
        <taxon>Dictyosteliaceae</taxon>
        <taxon>Dictyostelium</taxon>
    </lineage>
</organism>
<name>Y0809_DICDI</name>
<sequence length="983" mass="115511">MISNKRKEIDTINEHHEKNNDDSDGIDNGLLTYKKFKKDFESGSTNYRELQIIAKSLGLASNGKKQLVYNRIEGYFLSKKVKNNLTNNETNRQVEKKKEQQQPQPQEKQYILTFKDVEPVEIYFWKIFRNIVIFKHIFSNFKSKQYSYYDLIGCDEILLNGKSNSMEIIIDNIKSYNHQIIRNESNIIDIINKFKKNDEKTRSFYNLLFSRYSSTSTSPSTQLPSTIQFDGNIDIWIQRMIENVNYTALDQFIKFFKIDSEVIKKAIKIHIDPSFFGNTTYDKLKIYNYLKSINSIPTSHTLLSTISINFSTLLSFDNKFKKLIKSYKRLIESTNLQEQQEQLEKQGIIKIHPNKKYYEKLNQKILELNEIQTSQFTNYQLNSTIKKLLNHTTPTSTSTSTSTSTSTYTSTSTSTSTSLKTTNLTIISTESNYSSTNNNNNNINLKEIIKKYYKSIYLFIYFTINSANKTIFRKPLLYYLYFKKERVDKMYEHVIKKWNGSNFDHKLFFQRIFKDIKIEKNEKFELISNVLNNKYVKTFKLKDLHIFFEAVFSSNDIELIDYFLKILKQQQLNQTPETTTFPVIGSLISDYCHFIDKKEILDFYFQNYRDECLLFNDQNQTWKRIQLGLIEHYEYLTGSIGNRCNFDIFRWFDSSKFLDRLNRTIAKPLLYYFDFRGTINFNFNFIFKGLIDSNTEDSKENSIIHFLSNAQLKHPLYVSPILESSFNRYKSKMLTFIKFLFNNISKESIETKLKVINLKTDNKNFEEINSEIVLTTTLTTTTTTTTTTTTGTTATATNLLSAKKGEDVGFFIIGQTESFNFTVSIRILLVCLYRLDRVDDIIYLFDKLPEVLFNPDYFSIFTKEHCLYGISSSYYLELFINYFIENLNNNTINYLYNCLCIASKKGYTQIFKNIISSDHNSKYLLKIRTKSNQSSLFSSKLLNDIVVKSINSLNFELSNLLIDFIDFSEKDKNTLKMKIIKSK</sequence>
<feature type="chain" id="PRO_0000377737" description="UPF0746 protein DDB_G0280809">
    <location>
        <begin position="1"/>
        <end position="983"/>
    </location>
</feature>
<feature type="domain" description="SAP" evidence="1">
    <location>
        <begin position="42"/>
        <end position="76"/>
    </location>
</feature>
<feature type="region of interest" description="Disordered" evidence="2">
    <location>
        <begin position="1"/>
        <end position="26"/>
    </location>
</feature>
<feature type="region of interest" description="Disordered" evidence="2">
    <location>
        <begin position="391"/>
        <end position="413"/>
    </location>
</feature>
<feature type="compositionally biased region" description="Basic and acidic residues" evidence="2">
    <location>
        <begin position="1"/>
        <end position="21"/>
    </location>
</feature>
<feature type="compositionally biased region" description="Low complexity" evidence="2">
    <location>
        <begin position="392"/>
        <end position="413"/>
    </location>
</feature>
<accession>Q54UV8</accession>
<evidence type="ECO:0000255" key="1">
    <source>
        <dbReference type="PROSITE-ProRule" id="PRU00186"/>
    </source>
</evidence>
<evidence type="ECO:0000256" key="2">
    <source>
        <dbReference type="SAM" id="MobiDB-lite"/>
    </source>
</evidence>
<evidence type="ECO:0000305" key="3"/>
<dbReference type="EMBL" id="AAFI02000038">
    <property type="protein sequence ID" value="EAL67062.1"/>
    <property type="status" value="ALT_SEQ"/>
    <property type="molecule type" value="Genomic_DNA"/>
</dbReference>
<dbReference type="RefSeq" id="XP_641029.1">
    <property type="nucleotide sequence ID" value="XM_635937.1"/>
</dbReference>
<dbReference type="FunCoup" id="Q54UV8">
    <property type="interactions" value="9"/>
</dbReference>
<dbReference type="PaxDb" id="44689-DDB0220674"/>
<dbReference type="EnsemblProtists" id="EAL67062">
    <property type="protein sequence ID" value="EAL67062"/>
    <property type="gene ID" value="DDB_G0280809"/>
</dbReference>
<dbReference type="GeneID" id="8622731"/>
<dbReference type="KEGG" id="ddi:DDB_G0280809"/>
<dbReference type="dictyBase" id="DDB_G0280809"/>
<dbReference type="VEuPathDB" id="AmoebaDB:DDB_G0280809"/>
<dbReference type="eggNOG" id="ENOG502RSNK">
    <property type="taxonomic scope" value="Eukaryota"/>
</dbReference>
<dbReference type="InParanoid" id="Q54UV8"/>
<dbReference type="PRO" id="PR:Q54UV8"/>
<dbReference type="Proteomes" id="UP000002195">
    <property type="component" value="Chromosome 3"/>
</dbReference>
<dbReference type="GO" id="GO:0003677">
    <property type="term" value="F:DNA binding"/>
    <property type="evidence" value="ECO:0007669"/>
    <property type="project" value="UniProtKB-KW"/>
</dbReference>
<dbReference type="InterPro" id="IPR003034">
    <property type="entry name" value="SAP_dom"/>
</dbReference>
<dbReference type="InterPro" id="IPR051904">
    <property type="entry name" value="UPF0746_actin_org"/>
</dbReference>
<dbReference type="PANTHER" id="PTHR32488">
    <property type="entry name" value="UPF0746 PROTEIN DDB_G0280785-RELATED"/>
    <property type="match status" value="1"/>
</dbReference>
<dbReference type="PANTHER" id="PTHR32488:SF86">
    <property type="entry name" value="UPF0746 PROTEIN DDB_G0280785-RELATED"/>
    <property type="match status" value="1"/>
</dbReference>
<dbReference type="PROSITE" id="PS50800">
    <property type="entry name" value="SAP"/>
    <property type="match status" value="1"/>
</dbReference>
<reference key="1">
    <citation type="journal article" date="2005" name="Nature">
        <title>The genome of the social amoeba Dictyostelium discoideum.</title>
        <authorList>
            <person name="Eichinger L."/>
            <person name="Pachebat J.A."/>
            <person name="Gloeckner G."/>
            <person name="Rajandream M.A."/>
            <person name="Sucgang R."/>
            <person name="Berriman M."/>
            <person name="Song J."/>
            <person name="Olsen R."/>
            <person name="Szafranski K."/>
            <person name="Xu Q."/>
            <person name="Tunggal B."/>
            <person name="Kummerfeld S."/>
            <person name="Madera M."/>
            <person name="Konfortov B.A."/>
            <person name="Rivero F."/>
            <person name="Bankier A.T."/>
            <person name="Lehmann R."/>
            <person name="Hamlin N."/>
            <person name="Davies R."/>
            <person name="Gaudet P."/>
            <person name="Fey P."/>
            <person name="Pilcher K."/>
            <person name="Chen G."/>
            <person name="Saunders D."/>
            <person name="Sodergren E.J."/>
            <person name="Davis P."/>
            <person name="Kerhornou A."/>
            <person name="Nie X."/>
            <person name="Hall N."/>
            <person name="Anjard C."/>
            <person name="Hemphill L."/>
            <person name="Bason N."/>
            <person name="Farbrother P."/>
            <person name="Desany B."/>
            <person name="Just E."/>
            <person name="Morio T."/>
            <person name="Rost R."/>
            <person name="Churcher C.M."/>
            <person name="Cooper J."/>
            <person name="Haydock S."/>
            <person name="van Driessche N."/>
            <person name="Cronin A."/>
            <person name="Goodhead I."/>
            <person name="Muzny D.M."/>
            <person name="Mourier T."/>
            <person name="Pain A."/>
            <person name="Lu M."/>
            <person name="Harper D."/>
            <person name="Lindsay R."/>
            <person name="Hauser H."/>
            <person name="James K.D."/>
            <person name="Quiles M."/>
            <person name="Madan Babu M."/>
            <person name="Saito T."/>
            <person name="Buchrieser C."/>
            <person name="Wardroper A."/>
            <person name="Felder M."/>
            <person name="Thangavelu M."/>
            <person name="Johnson D."/>
            <person name="Knights A."/>
            <person name="Loulseged H."/>
            <person name="Mungall K.L."/>
            <person name="Oliver K."/>
            <person name="Price C."/>
            <person name="Quail M.A."/>
            <person name="Urushihara H."/>
            <person name="Hernandez J."/>
            <person name="Rabbinowitsch E."/>
            <person name="Steffen D."/>
            <person name="Sanders M."/>
            <person name="Ma J."/>
            <person name="Kohara Y."/>
            <person name="Sharp S."/>
            <person name="Simmonds M.N."/>
            <person name="Spiegler S."/>
            <person name="Tivey A."/>
            <person name="Sugano S."/>
            <person name="White B."/>
            <person name="Walker D."/>
            <person name="Woodward J.R."/>
            <person name="Winckler T."/>
            <person name="Tanaka Y."/>
            <person name="Shaulsky G."/>
            <person name="Schleicher M."/>
            <person name="Weinstock G.M."/>
            <person name="Rosenthal A."/>
            <person name="Cox E.C."/>
            <person name="Chisholm R.L."/>
            <person name="Gibbs R.A."/>
            <person name="Loomis W.F."/>
            <person name="Platzer M."/>
            <person name="Kay R.R."/>
            <person name="Williams J.G."/>
            <person name="Dear P.H."/>
            <person name="Noegel A.A."/>
            <person name="Barrell B.G."/>
            <person name="Kuspa A."/>
        </authorList>
    </citation>
    <scope>NUCLEOTIDE SEQUENCE [LARGE SCALE GENOMIC DNA]</scope>
    <source>
        <strain>AX4</strain>
    </source>
</reference>
<keyword id="KW-0238">DNA-binding</keyword>
<keyword id="KW-1185">Reference proteome</keyword>
<proteinExistence type="inferred from homology"/>
<gene>
    <name type="ORF">DDB_G0280809</name>
</gene>
<protein>
    <recommendedName>
        <fullName>UPF0746 protein DDB_G0280809</fullName>
    </recommendedName>
</protein>
<comment type="similarity">
    <text evidence="3">Belongs to the UPF0746 family.</text>
</comment>
<comment type="sequence caution" evidence="3">
    <conflict type="erroneous gene model prediction">
        <sequence resource="EMBL-CDS" id="EAL67062"/>
    </conflict>
</comment>